<keyword id="KW-0004">4Fe-4S</keyword>
<keyword id="KW-0067">ATP-binding</keyword>
<keyword id="KW-0963">Cytoplasm</keyword>
<keyword id="KW-0408">Iron</keyword>
<keyword id="KW-0411">Iron-sulfur</keyword>
<keyword id="KW-0479">Metal-binding</keyword>
<keyword id="KW-0547">Nucleotide-binding</keyword>
<organism>
    <name type="scientific">Drosophila yakuba</name>
    <name type="common">Fruit fly</name>
    <dbReference type="NCBI Taxonomy" id="7245"/>
    <lineage>
        <taxon>Eukaryota</taxon>
        <taxon>Metazoa</taxon>
        <taxon>Ecdysozoa</taxon>
        <taxon>Arthropoda</taxon>
        <taxon>Hexapoda</taxon>
        <taxon>Insecta</taxon>
        <taxon>Pterygota</taxon>
        <taxon>Neoptera</taxon>
        <taxon>Endopterygota</taxon>
        <taxon>Diptera</taxon>
        <taxon>Brachycera</taxon>
        <taxon>Muscomorpha</taxon>
        <taxon>Ephydroidea</taxon>
        <taxon>Drosophilidae</taxon>
        <taxon>Drosophila</taxon>
        <taxon>Sophophora</taxon>
    </lineage>
</organism>
<gene>
    <name type="ORF">GE19695</name>
</gene>
<dbReference type="EMBL" id="CM000159">
    <property type="protein sequence ID" value="EDW95148.1"/>
    <property type="molecule type" value="Genomic_DNA"/>
</dbReference>
<dbReference type="RefSeq" id="XP_002095436.1">
    <property type="nucleotide sequence ID" value="XM_002095400.2"/>
</dbReference>
<dbReference type="SMR" id="B4PES4"/>
<dbReference type="EnsemblMetazoa" id="FBtr0266213">
    <property type="protein sequence ID" value="FBpp0264705"/>
    <property type="gene ID" value="FBgn0237030"/>
</dbReference>
<dbReference type="GeneID" id="6534761"/>
<dbReference type="KEGG" id="dya:Dyak_GE19695"/>
<dbReference type="CTD" id="10101"/>
<dbReference type="eggNOG" id="KOG3022">
    <property type="taxonomic scope" value="Eukaryota"/>
</dbReference>
<dbReference type="HOGENOM" id="CLU_024839_0_1_1"/>
<dbReference type="OMA" id="DCTNVWG"/>
<dbReference type="OrthoDB" id="1741334at2759"/>
<dbReference type="PhylomeDB" id="B4PES4"/>
<dbReference type="Proteomes" id="UP000002282">
    <property type="component" value="Chromosome 3L"/>
</dbReference>
<dbReference type="GO" id="GO:0005829">
    <property type="term" value="C:cytosol"/>
    <property type="evidence" value="ECO:0007669"/>
    <property type="project" value="TreeGrafter"/>
</dbReference>
<dbReference type="GO" id="GO:0051539">
    <property type="term" value="F:4 iron, 4 sulfur cluster binding"/>
    <property type="evidence" value="ECO:0007669"/>
    <property type="project" value="UniProtKB-UniRule"/>
</dbReference>
<dbReference type="GO" id="GO:0005524">
    <property type="term" value="F:ATP binding"/>
    <property type="evidence" value="ECO:0007669"/>
    <property type="project" value="UniProtKB-KW"/>
</dbReference>
<dbReference type="GO" id="GO:0140663">
    <property type="term" value="F:ATP-dependent FeS chaperone activity"/>
    <property type="evidence" value="ECO:0007669"/>
    <property type="project" value="InterPro"/>
</dbReference>
<dbReference type="GO" id="GO:0046872">
    <property type="term" value="F:metal ion binding"/>
    <property type="evidence" value="ECO:0007669"/>
    <property type="project" value="UniProtKB-KW"/>
</dbReference>
<dbReference type="GO" id="GO:0016226">
    <property type="term" value="P:iron-sulfur cluster assembly"/>
    <property type="evidence" value="ECO:0007669"/>
    <property type="project" value="UniProtKB-UniRule"/>
</dbReference>
<dbReference type="CDD" id="cd02037">
    <property type="entry name" value="Mrp_NBP35"/>
    <property type="match status" value="1"/>
</dbReference>
<dbReference type="FunFam" id="3.40.50.300:FF:000796">
    <property type="entry name" value="Cytosolic Fe-S cluster assembly factor NUBP2"/>
    <property type="match status" value="1"/>
</dbReference>
<dbReference type="Gene3D" id="3.40.50.300">
    <property type="entry name" value="P-loop containing nucleotide triphosphate hydrolases"/>
    <property type="match status" value="1"/>
</dbReference>
<dbReference type="HAMAP" id="MF_02040">
    <property type="entry name" value="Mrp_NBP35"/>
    <property type="match status" value="1"/>
</dbReference>
<dbReference type="HAMAP" id="MF_03039">
    <property type="entry name" value="NUBP2"/>
    <property type="match status" value="1"/>
</dbReference>
<dbReference type="InterPro" id="IPR000808">
    <property type="entry name" value="Mrp-like_CS"/>
</dbReference>
<dbReference type="InterPro" id="IPR019591">
    <property type="entry name" value="Mrp/NBP35_ATP-bd"/>
</dbReference>
<dbReference type="InterPro" id="IPR028600">
    <property type="entry name" value="NUBP2/Cfd1_eukaryotes"/>
</dbReference>
<dbReference type="InterPro" id="IPR027417">
    <property type="entry name" value="P-loop_NTPase"/>
</dbReference>
<dbReference type="InterPro" id="IPR033756">
    <property type="entry name" value="YlxH/NBP35"/>
</dbReference>
<dbReference type="PANTHER" id="PTHR23264:SF19">
    <property type="entry name" value="CYTOSOLIC FE-S CLUSTER ASSEMBLY FACTOR NUBP2"/>
    <property type="match status" value="1"/>
</dbReference>
<dbReference type="PANTHER" id="PTHR23264">
    <property type="entry name" value="NUCLEOTIDE-BINDING PROTEIN NBP35 YEAST -RELATED"/>
    <property type="match status" value="1"/>
</dbReference>
<dbReference type="Pfam" id="PF10609">
    <property type="entry name" value="ParA"/>
    <property type="match status" value="1"/>
</dbReference>
<dbReference type="SUPFAM" id="SSF52540">
    <property type="entry name" value="P-loop containing nucleoside triphosphate hydrolases"/>
    <property type="match status" value="1"/>
</dbReference>
<dbReference type="PROSITE" id="PS01215">
    <property type="entry name" value="MRP"/>
    <property type="match status" value="1"/>
</dbReference>
<reference key="1">
    <citation type="journal article" date="2007" name="Nature">
        <title>Evolution of genes and genomes on the Drosophila phylogeny.</title>
        <authorList>
            <consortium name="Drosophila 12 genomes consortium"/>
        </authorList>
    </citation>
    <scope>NUCLEOTIDE SEQUENCE [LARGE SCALE GENOMIC DNA]</scope>
    <source>
        <strain>Tai18E2 / Tucson 14021-0261.01</strain>
    </source>
</reference>
<protein>
    <recommendedName>
        <fullName evidence="1">Cytosolic Fe-S cluster assembly factor Nubp2 homolog 2</fullName>
    </recommendedName>
</protein>
<proteinExistence type="inferred from homology"/>
<accession>B4PES4</accession>
<comment type="function">
    <text evidence="1">Component of the cytosolic iron-sulfur (Fe/S) protein assembly (CIA) machinery. Required for maturation of extramitochondrial Fe-S proteins. The Nubp1-Nubp2 heterotetramer forms a Fe-S scaffold complex, mediating the de novo assembly of an Fe-S cluster and its transfer to target apoproteins.</text>
</comment>
<comment type="cofactor">
    <cofactor evidence="1">
        <name>[4Fe-4S] cluster</name>
        <dbReference type="ChEBI" id="CHEBI:49883"/>
    </cofactor>
    <text evidence="1">Binds 4 [4Fe-4S] clusters per heterotetramer. Contains two stable clusters in the N-termini of Nubp1 and two labile, bridging clusters between subunits of the Nubp1-Nubp2 heterotetramer.</text>
</comment>
<comment type="subunit">
    <text evidence="1">Heterotetramer of 2 Nubp1 and 2 Nubp2 chains.</text>
</comment>
<comment type="subcellular location">
    <subcellularLocation>
        <location evidence="1">Cytoplasm</location>
    </subcellularLocation>
</comment>
<comment type="similarity">
    <text evidence="1">Belongs to the Mrp/NBP35 ATP-binding proteins family. NUBP2/CFD1 subfamily.</text>
</comment>
<name>NBP22_DROYA</name>
<feature type="chain" id="PRO_0000382720" description="Cytosolic Fe-S cluster assembly factor Nubp2 homolog 2">
    <location>
        <begin position="1"/>
        <end position="260"/>
    </location>
</feature>
<feature type="binding site" evidence="1">
    <location>
        <begin position="14"/>
        <end position="21"/>
    </location>
    <ligand>
        <name>ATP</name>
        <dbReference type="ChEBI" id="CHEBI:30616"/>
    </ligand>
</feature>
<feature type="binding site" evidence="1">
    <location>
        <position position="188"/>
    </location>
    <ligand>
        <name>[4Fe-4S] cluster</name>
        <dbReference type="ChEBI" id="CHEBI:49883"/>
        <note>ligand shared between dimeric partners</note>
    </ligand>
</feature>
<feature type="binding site" evidence="1">
    <location>
        <position position="191"/>
    </location>
    <ligand>
        <name>[4Fe-4S] cluster</name>
        <dbReference type="ChEBI" id="CHEBI:49883"/>
        <note>ligand shared between dimeric partners</note>
    </ligand>
</feature>
<evidence type="ECO:0000255" key="1">
    <source>
        <dbReference type="HAMAP-Rule" id="MF_03039"/>
    </source>
</evidence>
<sequence>MLEKVKNIIVVLSGKGGVGKSTVSTQLSLALRKNGFKVGLLDIDLCGPSVPYLLGLEGRDIFQCDEGWVPVYTDESQTLAVMSIGFLLKNREDPVIWRGPKKTMMIRQFLTDVRWDELDYLIIDTPPGTSDEHITVMECLKEVGCHGAIIVTTPQEVALDDVRKEITFCKKTSINILGIVENMSGFVCPHCTSCTNIFSSNGGTSLANYAQVPHLGTLPIDPRVGVLAGSTTSVLDELPDSTTAEVLTHIVEKLKTIFVS</sequence>